<comment type="function">
    <text>After the onset of mitosis, forms a ring-like structure which colocalizes with the medial actin ring. Appears to mediate cytoskeletal rearrangements required for cytokinesis. Essential for viability.</text>
</comment>
<comment type="interaction">
    <interactant intactId="EBI-1148185">
        <id>Q09822</id>
    </interactant>
    <interactant intactId="EBI-1542378">
        <id>O74338</id>
        <label>blt1</label>
    </interactant>
    <organismsDiffer>false</organismsDiffer>
    <experiments>2</experiments>
</comment>
<comment type="interaction">
    <interactant intactId="EBI-1148185">
        <id>Q09822</id>
    </interactant>
    <interactant intactId="EBI-1148281">
        <id>Q10059</id>
        <label>cdc12</label>
    </interactant>
    <organismsDiffer>false</organismsDiffer>
    <experiments>4</experiments>
</comment>
<comment type="interaction">
    <interactant intactId="EBI-1148185">
        <id>Q09822</id>
    </interactant>
    <interactant intactId="EBI-1148082">
        <id>Q9Y7Z8</id>
        <label>myo1</label>
    </interactant>
    <organismsDiffer>false</organismsDiffer>
    <experiments>4</experiments>
</comment>
<comment type="subcellular location">
    <subcellularLocation>
        <location>Cytoplasm</location>
        <location>Cytoskeleton</location>
    </subcellularLocation>
</comment>
<comment type="developmental stage">
    <text>Peaks in early mitosis before septation.</text>
</comment>
<comment type="domain">
    <text>The N-terminal region is in a coiled coil structure.</text>
</comment>
<keyword id="KW-0002">3D-structure</keyword>
<keyword id="KW-0131">Cell cycle</keyword>
<keyword id="KW-0132">Cell division</keyword>
<keyword id="KW-0175">Coiled coil</keyword>
<keyword id="KW-0963">Cytoplasm</keyword>
<keyword id="KW-0206">Cytoskeleton</keyword>
<keyword id="KW-0498">Mitosis</keyword>
<keyword id="KW-0597">Phosphoprotein</keyword>
<keyword id="KW-1185">Reference proteome</keyword>
<keyword id="KW-0728">SH3 domain</keyword>
<name>CDC15_SCHPO</name>
<organism>
    <name type="scientific">Schizosaccharomyces pombe (strain 972 / ATCC 24843)</name>
    <name type="common">Fission yeast</name>
    <dbReference type="NCBI Taxonomy" id="284812"/>
    <lineage>
        <taxon>Eukaryota</taxon>
        <taxon>Fungi</taxon>
        <taxon>Dikarya</taxon>
        <taxon>Ascomycota</taxon>
        <taxon>Taphrinomycotina</taxon>
        <taxon>Schizosaccharomycetes</taxon>
        <taxon>Schizosaccharomycetales</taxon>
        <taxon>Schizosaccharomycetaceae</taxon>
        <taxon>Schizosaccharomyces</taxon>
    </lineage>
</organism>
<evidence type="ECO:0000255" key="1"/>
<evidence type="ECO:0000255" key="2">
    <source>
        <dbReference type="PROSITE-ProRule" id="PRU00192"/>
    </source>
</evidence>
<evidence type="ECO:0000255" key="3">
    <source>
        <dbReference type="PROSITE-ProRule" id="PRU01077"/>
    </source>
</evidence>
<evidence type="ECO:0000256" key="4">
    <source>
        <dbReference type="SAM" id="MobiDB-lite"/>
    </source>
</evidence>
<evidence type="ECO:0000269" key="5">
    <source>
    </source>
</evidence>
<reference key="1">
    <citation type="journal article" date="1995" name="Cell">
        <title>The S. pombe cdc15 gene is a key element in the reorganization of F-actin at mitosis.</title>
        <authorList>
            <person name="Fankhauser C."/>
            <person name="Reymond A."/>
            <person name="Cerutti L."/>
            <person name="Utzig S."/>
            <person name="Hofmann K."/>
            <person name="Simanis V."/>
        </authorList>
    </citation>
    <scope>NUCLEOTIDE SEQUENCE [GENOMIC DNA]</scope>
    <source>
        <strain>972 / ATCC 24843</strain>
    </source>
</reference>
<reference key="2">
    <citation type="submission" date="1997-07" db="EMBL/GenBank/DDBJ databases">
        <authorList>
            <person name="Fankhauser C."/>
            <person name="Reymond A."/>
            <person name="Cerutti L."/>
            <person name="Utzig S."/>
            <person name="Hofmann K."/>
            <person name="Simanis V."/>
        </authorList>
    </citation>
    <scope>SEQUENCE REVISION TO N-TERMINUS</scope>
</reference>
<reference key="3">
    <citation type="journal article" date="2002" name="Nature">
        <title>The genome sequence of Schizosaccharomyces pombe.</title>
        <authorList>
            <person name="Wood V."/>
            <person name="Gwilliam R."/>
            <person name="Rajandream M.A."/>
            <person name="Lyne M.H."/>
            <person name="Lyne R."/>
            <person name="Stewart A."/>
            <person name="Sgouros J.G."/>
            <person name="Peat N."/>
            <person name="Hayles J."/>
            <person name="Baker S.G."/>
            <person name="Basham D."/>
            <person name="Bowman S."/>
            <person name="Brooks K."/>
            <person name="Brown D."/>
            <person name="Brown S."/>
            <person name="Chillingworth T."/>
            <person name="Churcher C.M."/>
            <person name="Collins M."/>
            <person name="Connor R."/>
            <person name="Cronin A."/>
            <person name="Davis P."/>
            <person name="Feltwell T."/>
            <person name="Fraser A."/>
            <person name="Gentles S."/>
            <person name="Goble A."/>
            <person name="Hamlin N."/>
            <person name="Harris D.E."/>
            <person name="Hidalgo J."/>
            <person name="Hodgson G."/>
            <person name="Holroyd S."/>
            <person name="Hornsby T."/>
            <person name="Howarth S."/>
            <person name="Huckle E.J."/>
            <person name="Hunt S."/>
            <person name="Jagels K."/>
            <person name="James K.D."/>
            <person name="Jones L."/>
            <person name="Jones M."/>
            <person name="Leather S."/>
            <person name="McDonald S."/>
            <person name="McLean J."/>
            <person name="Mooney P."/>
            <person name="Moule S."/>
            <person name="Mungall K.L."/>
            <person name="Murphy L.D."/>
            <person name="Niblett D."/>
            <person name="Odell C."/>
            <person name="Oliver K."/>
            <person name="O'Neil S."/>
            <person name="Pearson D."/>
            <person name="Quail M.A."/>
            <person name="Rabbinowitsch E."/>
            <person name="Rutherford K.M."/>
            <person name="Rutter S."/>
            <person name="Saunders D."/>
            <person name="Seeger K."/>
            <person name="Sharp S."/>
            <person name="Skelton J."/>
            <person name="Simmonds M.N."/>
            <person name="Squares R."/>
            <person name="Squares S."/>
            <person name="Stevens K."/>
            <person name="Taylor K."/>
            <person name="Taylor R.G."/>
            <person name="Tivey A."/>
            <person name="Walsh S.V."/>
            <person name="Warren T."/>
            <person name="Whitehead S."/>
            <person name="Woodward J.R."/>
            <person name="Volckaert G."/>
            <person name="Aert R."/>
            <person name="Robben J."/>
            <person name="Grymonprez B."/>
            <person name="Weltjens I."/>
            <person name="Vanstreels E."/>
            <person name="Rieger M."/>
            <person name="Schaefer M."/>
            <person name="Mueller-Auer S."/>
            <person name="Gabel C."/>
            <person name="Fuchs M."/>
            <person name="Duesterhoeft A."/>
            <person name="Fritzc C."/>
            <person name="Holzer E."/>
            <person name="Moestl D."/>
            <person name="Hilbert H."/>
            <person name="Borzym K."/>
            <person name="Langer I."/>
            <person name="Beck A."/>
            <person name="Lehrach H."/>
            <person name="Reinhardt R."/>
            <person name="Pohl T.M."/>
            <person name="Eger P."/>
            <person name="Zimmermann W."/>
            <person name="Wedler H."/>
            <person name="Wambutt R."/>
            <person name="Purnelle B."/>
            <person name="Goffeau A."/>
            <person name="Cadieu E."/>
            <person name="Dreano S."/>
            <person name="Gloux S."/>
            <person name="Lelaure V."/>
            <person name="Mottier S."/>
            <person name="Galibert F."/>
            <person name="Aves S.J."/>
            <person name="Xiang Z."/>
            <person name="Hunt C."/>
            <person name="Moore K."/>
            <person name="Hurst S.M."/>
            <person name="Lucas M."/>
            <person name="Rochet M."/>
            <person name="Gaillardin C."/>
            <person name="Tallada V.A."/>
            <person name="Garzon A."/>
            <person name="Thode G."/>
            <person name="Daga R.R."/>
            <person name="Cruzado L."/>
            <person name="Jimenez J."/>
            <person name="Sanchez M."/>
            <person name="del Rey F."/>
            <person name="Benito J."/>
            <person name="Dominguez A."/>
            <person name="Revuelta J.L."/>
            <person name="Moreno S."/>
            <person name="Armstrong J."/>
            <person name="Forsburg S.L."/>
            <person name="Cerutti L."/>
            <person name="Lowe T."/>
            <person name="McCombie W.R."/>
            <person name="Paulsen I."/>
            <person name="Potashkin J."/>
            <person name="Shpakovski G.V."/>
            <person name="Ussery D."/>
            <person name="Barrell B.G."/>
            <person name="Nurse P."/>
        </authorList>
    </citation>
    <scope>NUCLEOTIDE SEQUENCE [LARGE SCALE GENOMIC DNA]</scope>
    <source>
        <strain>972 / ATCC 24843</strain>
    </source>
</reference>
<reference key="4">
    <citation type="journal article" date="2000" name="Genes Cells">
        <title>Large-scale screening of intracellular protein localization in living fission yeast cells by the use of a GFP-fusion genomic DNA library.</title>
        <authorList>
            <person name="Ding D.-Q."/>
            <person name="Tomita Y."/>
            <person name="Yamamoto A."/>
            <person name="Chikashige Y."/>
            <person name="Haraguchi T."/>
            <person name="Hiraoka Y."/>
        </authorList>
    </citation>
    <scope>NUCLEOTIDE SEQUENCE [LARGE SCALE GENOMIC DNA] OF 286-425</scope>
    <source>
        <strain>ATCC 38364 / 968</strain>
    </source>
</reference>
<reference key="5">
    <citation type="journal article" date="2008" name="J. Proteome Res.">
        <title>Phosphoproteome analysis of fission yeast.</title>
        <authorList>
            <person name="Wilson-Grady J.T."/>
            <person name="Villen J."/>
            <person name="Gygi S.P."/>
        </authorList>
    </citation>
    <scope>PHOSPHORYLATION [LARGE SCALE ANALYSIS] AT SER-331; SER-332; THR-529; SER-636; SER-639; SER-700 AND SER-774</scope>
    <scope>IDENTIFICATION BY MASS SPECTROMETRY</scope>
</reference>
<accession>Q09822</accession>
<accession>O14365</accession>
<accession>Q9UU50</accession>
<protein>
    <recommendedName>
        <fullName>Cell division control protein 15</fullName>
    </recommendedName>
</protein>
<gene>
    <name type="primary">cdc15</name>
    <name type="ORF">SPAC20G8.05c</name>
</gene>
<dbReference type="EMBL" id="X86179">
    <property type="protein sequence ID" value="CAA60115.1"/>
    <property type="molecule type" value="Genomic_DNA"/>
</dbReference>
<dbReference type="EMBL" id="CU329670">
    <property type="protein sequence ID" value="CAB08599.2"/>
    <property type="molecule type" value="Genomic_DNA"/>
</dbReference>
<dbReference type="EMBL" id="AB027810">
    <property type="protein sequence ID" value="BAA87114.1"/>
    <property type="molecule type" value="Genomic_DNA"/>
</dbReference>
<dbReference type="PIR" id="T38127">
    <property type="entry name" value="T38127"/>
</dbReference>
<dbReference type="RefSeq" id="NP_593322.1">
    <property type="nucleotide sequence ID" value="NM_001018753.2"/>
</dbReference>
<dbReference type="PDB" id="6XJ1">
    <property type="method" value="X-ray"/>
    <property type="resolution" value="3.52 A"/>
    <property type="chains" value="A/B=19-312"/>
</dbReference>
<dbReference type="PDBsum" id="6XJ1"/>
<dbReference type="SMR" id="Q09822"/>
<dbReference type="BioGRID" id="278460">
    <property type="interactions" value="59"/>
</dbReference>
<dbReference type="DIP" id="DIP-35649N"/>
<dbReference type="FunCoup" id="Q09822">
    <property type="interactions" value="33"/>
</dbReference>
<dbReference type="IntAct" id="Q09822">
    <property type="interactions" value="4"/>
</dbReference>
<dbReference type="STRING" id="284812.Q09822"/>
<dbReference type="iPTMnet" id="Q09822"/>
<dbReference type="PaxDb" id="4896-SPAC20G8.05c.1"/>
<dbReference type="EnsemblFungi" id="SPAC20G8.05c.1">
    <property type="protein sequence ID" value="SPAC20G8.05c.1:pep"/>
    <property type="gene ID" value="SPAC20G8.05c"/>
</dbReference>
<dbReference type="GeneID" id="2541975"/>
<dbReference type="KEGG" id="spo:2541975"/>
<dbReference type="PomBase" id="SPAC20G8.05c">
    <property type="gene designation" value="cdc15"/>
</dbReference>
<dbReference type="VEuPathDB" id="FungiDB:SPAC20G8.05c"/>
<dbReference type="eggNOG" id="KOG2398">
    <property type="taxonomic scope" value="Eukaryota"/>
</dbReference>
<dbReference type="HOGENOM" id="CLU_003525_0_0_1"/>
<dbReference type="InParanoid" id="Q09822"/>
<dbReference type="OMA" id="ETTVRWN"/>
<dbReference type="PhylomeDB" id="Q09822"/>
<dbReference type="Reactome" id="R-SPO-8856828">
    <property type="pathway name" value="Clathrin-mediated endocytosis"/>
</dbReference>
<dbReference type="PRO" id="PR:Q09822"/>
<dbReference type="Proteomes" id="UP000002485">
    <property type="component" value="Chromosome I"/>
</dbReference>
<dbReference type="GO" id="GO:0030479">
    <property type="term" value="C:actin cortical patch"/>
    <property type="evidence" value="ECO:0000314"/>
    <property type="project" value="PomBase"/>
</dbReference>
<dbReference type="GO" id="GO:0032153">
    <property type="term" value="C:cell division site"/>
    <property type="evidence" value="ECO:0000314"/>
    <property type="project" value="PomBase"/>
</dbReference>
<dbReference type="GO" id="GO:0051286">
    <property type="term" value="C:cell tip"/>
    <property type="evidence" value="ECO:0007005"/>
    <property type="project" value="PomBase"/>
</dbReference>
<dbReference type="GO" id="GO:0005737">
    <property type="term" value="C:cytoplasm"/>
    <property type="evidence" value="ECO:0000314"/>
    <property type="project" value="PomBase"/>
</dbReference>
<dbReference type="GO" id="GO:0009898">
    <property type="term" value="C:cytoplasmic side of plasma membrane"/>
    <property type="evidence" value="ECO:0000314"/>
    <property type="project" value="PomBase"/>
</dbReference>
<dbReference type="GO" id="GO:0043332">
    <property type="term" value="C:mating projection tip"/>
    <property type="evidence" value="ECO:0000314"/>
    <property type="project" value="PomBase"/>
</dbReference>
<dbReference type="GO" id="GO:0071341">
    <property type="term" value="C:medial cortical node"/>
    <property type="evidence" value="ECO:0000314"/>
    <property type="project" value="PomBase"/>
</dbReference>
<dbReference type="GO" id="GO:0032178">
    <property type="term" value="C:medial membrane band"/>
    <property type="evidence" value="ECO:0000314"/>
    <property type="project" value="PomBase"/>
</dbReference>
<dbReference type="GO" id="GO:0110085">
    <property type="term" value="C:mitotic actomyosin contractile ring"/>
    <property type="evidence" value="ECO:0000314"/>
    <property type="project" value="PomBase"/>
</dbReference>
<dbReference type="GO" id="GO:0120104">
    <property type="term" value="C:mitotic actomyosin contractile ring, proximal layer"/>
    <property type="evidence" value="ECO:0000314"/>
    <property type="project" value="PomBase"/>
</dbReference>
<dbReference type="GO" id="GO:0005886">
    <property type="term" value="C:plasma membrane"/>
    <property type="evidence" value="ECO:0000314"/>
    <property type="project" value="PomBase"/>
</dbReference>
<dbReference type="GO" id="GO:0106006">
    <property type="term" value="F:cytoskeletal protein-membrane anchor activity"/>
    <property type="evidence" value="ECO:0000314"/>
    <property type="project" value="PomBase"/>
</dbReference>
<dbReference type="GO" id="GO:0005543">
    <property type="term" value="F:phospholipid binding"/>
    <property type="evidence" value="ECO:0000314"/>
    <property type="project" value="PomBase"/>
</dbReference>
<dbReference type="GO" id="GO:0072583">
    <property type="term" value="P:clathrin-dependent endocytosis"/>
    <property type="evidence" value="ECO:0000315"/>
    <property type="project" value="PomBase"/>
</dbReference>
<dbReference type="GO" id="GO:0007010">
    <property type="term" value="P:cytoskeleton organization"/>
    <property type="evidence" value="ECO:0000318"/>
    <property type="project" value="GO_Central"/>
</dbReference>
<dbReference type="GO" id="GO:0061171">
    <property type="term" value="P:establishment of bipolar cell polarity"/>
    <property type="evidence" value="ECO:0000315"/>
    <property type="project" value="PomBase"/>
</dbReference>
<dbReference type="GO" id="GO:1903475">
    <property type="term" value="P:mitotic actomyosin contractile ring assembly"/>
    <property type="evidence" value="ECO:0000315"/>
    <property type="project" value="PomBase"/>
</dbReference>
<dbReference type="CDD" id="cd07651">
    <property type="entry name" value="F-BAR_PombeCdc15_like"/>
    <property type="match status" value="1"/>
</dbReference>
<dbReference type="CDD" id="cd00174">
    <property type="entry name" value="SH3"/>
    <property type="match status" value="1"/>
</dbReference>
<dbReference type="FunFam" id="2.30.30.40:FF:000164">
    <property type="entry name" value="Cell division control protein"/>
    <property type="match status" value="1"/>
</dbReference>
<dbReference type="Gene3D" id="1.20.1270.60">
    <property type="entry name" value="Arfaptin homology (AH) domain/BAR domain"/>
    <property type="match status" value="1"/>
</dbReference>
<dbReference type="Gene3D" id="2.30.30.40">
    <property type="entry name" value="SH3 Domains"/>
    <property type="match status" value="1"/>
</dbReference>
<dbReference type="InterPro" id="IPR027267">
    <property type="entry name" value="AH/BAR_dom_sf"/>
</dbReference>
<dbReference type="InterPro" id="IPR031160">
    <property type="entry name" value="F_BAR"/>
</dbReference>
<dbReference type="InterPro" id="IPR001060">
    <property type="entry name" value="FCH_dom"/>
</dbReference>
<dbReference type="InterPro" id="IPR036028">
    <property type="entry name" value="SH3-like_dom_sf"/>
</dbReference>
<dbReference type="InterPro" id="IPR001452">
    <property type="entry name" value="SH3_domain"/>
</dbReference>
<dbReference type="PANTHER" id="PTHR23065:SF60">
    <property type="entry name" value="CELL DIVISION CONTROL PROTEIN 15"/>
    <property type="match status" value="1"/>
</dbReference>
<dbReference type="PANTHER" id="PTHR23065">
    <property type="entry name" value="PROLINE-SERINE-THREONINE PHOSPHATASE INTERACTING PROTEIN 1"/>
    <property type="match status" value="1"/>
</dbReference>
<dbReference type="Pfam" id="PF00611">
    <property type="entry name" value="FCH"/>
    <property type="match status" value="1"/>
</dbReference>
<dbReference type="Pfam" id="PF00018">
    <property type="entry name" value="SH3_1"/>
    <property type="match status" value="1"/>
</dbReference>
<dbReference type="PRINTS" id="PR00452">
    <property type="entry name" value="SH3DOMAIN"/>
</dbReference>
<dbReference type="SMART" id="SM00055">
    <property type="entry name" value="FCH"/>
    <property type="match status" value="1"/>
</dbReference>
<dbReference type="SMART" id="SM00326">
    <property type="entry name" value="SH3"/>
    <property type="match status" value="1"/>
</dbReference>
<dbReference type="SUPFAM" id="SSF103657">
    <property type="entry name" value="BAR/IMD domain-like"/>
    <property type="match status" value="1"/>
</dbReference>
<dbReference type="SUPFAM" id="SSF50044">
    <property type="entry name" value="SH3-domain"/>
    <property type="match status" value="1"/>
</dbReference>
<dbReference type="PROSITE" id="PS51741">
    <property type="entry name" value="F_BAR"/>
    <property type="match status" value="1"/>
</dbReference>
<dbReference type="PROSITE" id="PS50002">
    <property type="entry name" value="SH3"/>
    <property type="match status" value="1"/>
</dbReference>
<sequence length="927" mass="102119">MEVNGVSQSEAAPYVTKSSVKFRDNFWGSEDAGMDALMSRTKSSLSVLESIDEFYAKRASIEREYASKLQELAASSADIPEVGSTLNNILSMRTETGSMAKAHEEVSQQINTELRNKIREYIDQTEQQKVVAANAIEELYQKKTALEIDLSEKKDAYEYSCNKLNSYMRQTKKMTGRELDKYNLKIRQAALAVKKMDAEYRETNELLLTVTREWIDRWTEVCDAFQHIEEYRLEFLKTNMWAYANIISTACVKDDESCEKIRLTLENTNIDEDITQMIQNEGTGTTIPPLPEFNDYFKENGLNYDIDQLISKAPSYPYSSSRPSASASLASSPTRSAFRPKTSETVSSEVVSSPPTSPLHSPVKPVSNEQVEQVTEVELSIPVPSIQEAESQKPVLTGSSMRRPSVTSPTFEVAARPLTSMDVRSSHNAETEVQAIPAATDISPEVKEGKNSENAITKDNDDIILSSQLQPTATGSRSSRLSFSRHGHGSQTSLGSIKRKSIMERMGRPTSPFMGSSFSNMGSRSTSPTKEGFASNQHATGASVQSDELEDIDPRANVVLNVGPNMLSVGEAPVESTSKEEDKDVPDPIANAMAELSSSMRRRQSTSVDDEAPVSLSKTSSSTRLNGLGYHSRNTSIASDIDGVPKKSTLGAPPAAHTSAQMQRMSNSFASQTKQVFGEQRTENSARESLRHSRSNMSRSPSPMLSRRSSTLRPSFERSASSLSVRQSDVVSPAPSTRARGQSVSGQQRPSSSMSLYGEYNKSQPQLSMQRSVSPNPLGPNRRSSSVLQSQKSTSSNTSNRNNGGYSGSRPSSEMGHRYGSMSGRSMRQVSQRSTSRARSPEPTNRNSVQSKNVDPRATFTAEGEPILGYVIALYDYQAQIPEEISFQKGDTLMVLRTQEDGWWDGEIINVPNSKRGLFPSNFVQTV</sequence>
<feature type="chain" id="PRO_0000089443" description="Cell division control protein 15">
    <location>
        <begin position="1"/>
        <end position="927"/>
    </location>
</feature>
<feature type="domain" description="F-BAR" evidence="3">
    <location>
        <begin position="20"/>
        <end position="273"/>
    </location>
</feature>
<feature type="domain" description="SH3" evidence="2">
    <location>
        <begin position="866"/>
        <end position="927"/>
    </location>
</feature>
<feature type="region of interest" description="Disordered" evidence="4">
    <location>
        <begin position="321"/>
        <end position="370"/>
    </location>
</feature>
<feature type="region of interest" description="Disordered" evidence="4">
    <location>
        <begin position="390"/>
        <end position="409"/>
    </location>
</feature>
<feature type="region of interest" description="Disordered" evidence="4">
    <location>
        <begin position="423"/>
        <end position="495"/>
    </location>
</feature>
<feature type="region of interest" description="Disordered" evidence="4">
    <location>
        <begin position="509"/>
        <end position="550"/>
    </location>
</feature>
<feature type="region of interest" description="Disordered" evidence="4">
    <location>
        <begin position="597"/>
        <end position="857"/>
    </location>
</feature>
<feature type="coiled-coil region" evidence="1">
    <location>
        <begin position="108"/>
        <end position="207"/>
    </location>
</feature>
<feature type="compositionally biased region" description="Low complexity" evidence="4">
    <location>
        <begin position="321"/>
        <end position="354"/>
    </location>
</feature>
<feature type="compositionally biased region" description="Polar residues" evidence="4">
    <location>
        <begin position="397"/>
        <end position="409"/>
    </location>
</feature>
<feature type="compositionally biased region" description="Basic and acidic residues" evidence="4">
    <location>
        <begin position="444"/>
        <end position="461"/>
    </location>
</feature>
<feature type="compositionally biased region" description="Polar residues" evidence="4">
    <location>
        <begin position="465"/>
        <end position="482"/>
    </location>
</feature>
<feature type="compositionally biased region" description="Polar residues" evidence="4">
    <location>
        <begin position="513"/>
        <end position="546"/>
    </location>
</feature>
<feature type="compositionally biased region" description="Polar residues" evidence="4">
    <location>
        <begin position="616"/>
        <end position="625"/>
    </location>
</feature>
<feature type="compositionally biased region" description="Polar residues" evidence="4">
    <location>
        <begin position="658"/>
        <end position="675"/>
    </location>
</feature>
<feature type="compositionally biased region" description="Basic and acidic residues" evidence="4">
    <location>
        <begin position="680"/>
        <end position="691"/>
    </location>
</feature>
<feature type="compositionally biased region" description="Low complexity" evidence="4">
    <location>
        <begin position="695"/>
        <end position="714"/>
    </location>
</feature>
<feature type="compositionally biased region" description="Polar residues" evidence="4">
    <location>
        <begin position="718"/>
        <end position="730"/>
    </location>
</feature>
<feature type="compositionally biased region" description="Polar residues" evidence="4">
    <location>
        <begin position="739"/>
        <end position="775"/>
    </location>
</feature>
<feature type="compositionally biased region" description="Low complexity" evidence="4">
    <location>
        <begin position="784"/>
        <end position="813"/>
    </location>
</feature>
<feature type="compositionally biased region" description="Polar residues" evidence="4">
    <location>
        <begin position="823"/>
        <end position="853"/>
    </location>
</feature>
<feature type="modified residue" description="Phosphoserine" evidence="5">
    <location>
        <position position="331"/>
    </location>
</feature>
<feature type="modified residue" description="Phosphoserine" evidence="5">
    <location>
        <position position="332"/>
    </location>
</feature>
<feature type="modified residue" description="Phosphothreonine" evidence="5">
    <location>
        <position position="529"/>
    </location>
</feature>
<feature type="modified residue" description="Phosphoserine" evidence="5">
    <location>
        <position position="636"/>
    </location>
</feature>
<feature type="modified residue" description="Phosphoserine" evidence="5">
    <location>
        <position position="639"/>
    </location>
</feature>
<feature type="modified residue" description="Phosphoserine" evidence="5">
    <location>
        <position position="700"/>
    </location>
</feature>
<feature type="modified residue" description="Phosphoserine" evidence="5">
    <location>
        <position position="774"/>
    </location>
</feature>
<proteinExistence type="evidence at protein level"/>